<organism>
    <name type="scientific">Neisseria meningitidis serogroup A / serotype 4A (strain DSM 15465 / Z2491)</name>
    <dbReference type="NCBI Taxonomy" id="122587"/>
    <lineage>
        <taxon>Bacteria</taxon>
        <taxon>Pseudomonadati</taxon>
        <taxon>Pseudomonadota</taxon>
        <taxon>Betaproteobacteria</taxon>
        <taxon>Neisseriales</taxon>
        <taxon>Neisseriaceae</taxon>
        <taxon>Neisseria</taxon>
    </lineage>
</organism>
<evidence type="ECO:0000255" key="1">
    <source>
        <dbReference type="HAMAP-Rule" id="MF_00076"/>
    </source>
</evidence>
<name>HIS7_NEIMA</name>
<proteinExistence type="inferred from homology"/>
<dbReference type="EC" id="4.2.1.19" evidence="1"/>
<dbReference type="EMBL" id="AL157959">
    <property type="protein sequence ID" value="CAM08899.1"/>
    <property type="molecule type" value="Genomic_DNA"/>
</dbReference>
<dbReference type="SMR" id="P64370"/>
<dbReference type="EnsemblBacteria" id="CAM08899">
    <property type="protein sequence ID" value="CAM08899"/>
    <property type="gene ID" value="NMA1772"/>
</dbReference>
<dbReference type="KEGG" id="nma:NMA1772"/>
<dbReference type="HOGENOM" id="CLU_044308_1_1_4"/>
<dbReference type="UniPathway" id="UPA00031">
    <property type="reaction ID" value="UER00011"/>
</dbReference>
<dbReference type="Proteomes" id="UP000000626">
    <property type="component" value="Chromosome"/>
</dbReference>
<dbReference type="GO" id="GO:0005737">
    <property type="term" value="C:cytoplasm"/>
    <property type="evidence" value="ECO:0007669"/>
    <property type="project" value="UniProtKB-SubCell"/>
</dbReference>
<dbReference type="GO" id="GO:0004424">
    <property type="term" value="F:imidazoleglycerol-phosphate dehydratase activity"/>
    <property type="evidence" value="ECO:0007669"/>
    <property type="project" value="UniProtKB-UniRule"/>
</dbReference>
<dbReference type="GO" id="GO:0000105">
    <property type="term" value="P:L-histidine biosynthetic process"/>
    <property type="evidence" value="ECO:0007669"/>
    <property type="project" value="UniProtKB-UniRule"/>
</dbReference>
<dbReference type="CDD" id="cd07914">
    <property type="entry name" value="IGPD"/>
    <property type="match status" value="1"/>
</dbReference>
<dbReference type="FunFam" id="3.30.230.40:FF:000002">
    <property type="entry name" value="Imidazoleglycerol-phosphate dehydratase"/>
    <property type="match status" value="1"/>
</dbReference>
<dbReference type="FunFam" id="3.30.230.40:FF:000003">
    <property type="entry name" value="Imidazoleglycerol-phosphate dehydratase HisB"/>
    <property type="match status" value="1"/>
</dbReference>
<dbReference type="Gene3D" id="3.30.230.40">
    <property type="entry name" value="Imidazole glycerol phosphate dehydratase, domain 1"/>
    <property type="match status" value="2"/>
</dbReference>
<dbReference type="HAMAP" id="MF_00076">
    <property type="entry name" value="HisB"/>
    <property type="match status" value="1"/>
</dbReference>
<dbReference type="InterPro" id="IPR038494">
    <property type="entry name" value="IGPD_sf"/>
</dbReference>
<dbReference type="InterPro" id="IPR000807">
    <property type="entry name" value="ImidazoleglycerolP_deHydtase"/>
</dbReference>
<dbReference type="InterPro" id="IPR020565">
    <property type="entry name" value="ImidazoleglycerP_deHydtase_CS"/>
</dbReference>
<dbReference type="InterPro" id="IPR020568">
    <property type="entry name" value="Ribosomal_Su5_D2-typ_SF"/>
</dbReference>
<dbReference type="NCBIfam" id="NF002106">
    <property type="entry name" value="PRK00951.1-1"/>
    <property type="match status" value="1"/>
</dbReference>
<dbReference type="NCBIfam" id="NF002109">
    <property type="entry name" value="PRK00951.1-5"/>
    <property type="match status" value="1"/>
</dbReference>
<dbReference type="NCBIfam" id="NF002111">
    <property type="entry name" value="PRK00951.2-1"/>
    <property type="match status" value="1"/>
</dbReference>
<dbReference type="NCBIfam" id="NF002114">
    <property type="entry name" value="PRK00951.2-4"/>
    <property type="match status" value="1"/>
</dbReference>
<dbReference type="PANTHER" id="PTHR23133:SF2">
    <property type="entry name" value="IMIDAZOLEGLYCEROL-PHOSPHATE DEHYDRATASE"/>
    <property type="match status" value="1"/>
</dbReference>
<dbReference type="PANTHER" id="PTHR23133">
    <property type="entry name" value="IMIDAZOLEGLYCEROL-PHOSPHATE DEHYDRATASE HIS7"/>
    <property type="match status" value="1"/>
</dbReference>
<dbReference type="Pfam" id="PF00475">
    <property type="entry name" value="IGPD"/>
    <property type="match status" value="1"/>
</dbReference>
<dbReference type="SUPFAM" id="SSF54211">
    <property type="entry name" value="Ribosomal protein S5 domain 2-like"/>
    <property type="match status" value="2"/>
</dbReference>
<dbReference type="PROSITE" id="PS00954">
    <property type="entry name" value="IGP_DEHYDRATASE_1"/>
    <property type="match status" value="1"/>
</dbReference>
<dbReference type="PROSITE" id="PS00955">
    <property type="entry name" value="IGP_DEHYDRATASE_2"/>
    <property type="match status" value="1"/>
</dbReference>
<reference key="1">
    <citation type="journal article" date="2000" name="Nature">
        <title>Complete DNA sequence of a serogroup A strain of Neisseria meningitidis Z2491.</title>
        <authorList>
            <person name="Parkhill J."/>
            <person name="Achtman M."/>
            <person name="James K.D."/>
            <person name="Bentley S.D."/>
            <person name="Churcher C.M."/>
            <person name="Klee S.R."/>
            <person name="Morelli G."/>
            <person name="Basham D."/>
            <person name="Brown D."/>
            <person name="Chillingworth T."/>
            <person name="Davies R.M."/>
            <person name="Davis P."/>
            <person name="Devlin K."/>
            <person name="Feltwell T."/>
            <person name="Hamlin N."/>
            <person name="Holroyd S."/>
            <person name="Jagels K."/>
            <person name="Leather S."/>
            <person name="Moule S."/>
            <person name="Mungall K.L."/>
            <person name="Quail M.A."/>
            <person name="Rajandream M.A."/>
            <person name="Rutherford K.M."/>
            <person name="Simmonds M."/>
            <person name="Skelton J."/>
            <person name="Whitehead S."/>
            <person name="Spratt B.G."/>
            <person name="Barrell B.G."/>
        </authorList>
    </citation>
    <scope>NUCLEOTIDE SEQUENCE [LARGE SCALE GENOMIC DNA]</scope>
    <source>
        <strain>DSM 15465 / Z2491</strain>
    </source>
</reference>
<comment type="catalytic activity">
    <reaction evidence="1">
        <text>D-erythro-1-(imidazol-4-yl)glycerol 3-phosphate = 3-(imidazol-4-yl)-2-oxopropyl phosphate + H2O</text>
        <dbReference type="Rhea" id="RHEA:11040"/>
        <dbReference type="ChEBI" id="CHEBI:15377"/>
        <dbReference type="ChEBI" id="CHEBI:57766"/>
        <dbReference type="ChEBI" id="CHEBI:58278"/>
        <dbReference type="EC" id="4.2.1.19"/>
    </reaction>
</comment>
<comment type="pathway">
    <text evidence="1">Amino-acid biosynthesis; L-histidine biosynthesis; L-histidine from 5-phospho-alpha-D-ribose 1-diphosphate: step 6/9.</text>
</comment>
<comment type="subcellular location">
    <subcellularLocation>
        <location evidence="1">Cytoplasm</location>
    </subcellularLocation>
</comment>
<comment type="similarity">
    <text evidence="1">Belongs to the imidazoleglycerol-phosphate dehydratase family.</text>
</comment>
<accession>P64370</accession>
<accession>A1ISY7</accession>
<accession>Q9JRJ7</accession>
<keyword id="KW-0028">Amino-acid biosynthesis</keyword>
<keyword id="KW-0963">Cytoplasm</keyword>
<keyword id="KW-0368">Histidine biosynthesis</keyword>
<keyword id="KW-0456">Lyase</keyword>
<protein>
    <recommendedName>
        <fullName evidence="1">Imidazoleglycerol-phosphate dehydratase</fullName>
        <shortName evidence="1">IGPD</shortName>
        <ecNumber evidence="1">4.2.1.19</ecNumber>
    </recommendedName>
</protein>
<gene>
    <name evidence="1" type="primary">hisB</name>
    <name type="ordered locus">NMA1772</name>
</gene>
<feature type="chain" id="PRO_0000158147" description="Imidazoleglycerol-phosphate dehydratase">
    <location>
        <begin position="1"/>
        <end position="305"/>
    </location>
</feature>
<sequence length="305" mass="33739">MNLTKTQRQLHNFLTLAQEAGSLSKLAKLCGYRTPVALYKLKQRLEKQAEDPDARGIRPSLMAKLEKHTGKPKGWLDRKHRERTVPETAAESTGTAETQIAETASAAGCRSVTVNRNTCETQITVSINLDGSGKSRLDTGVPFLEHMIDQIARHGMIDIDISCKGDLHIDDHHTAEDIGITLGQAIRQALGDKKGIRRYGHSYVPLDEALSRVVIDLSGRPGLVYNIEFTRALIGRFDVDLFEEFFHGIVNHSMMTLHIDNLSGKNAHHQAETVFKAFGRALRMAVEHDPRMAGQTPSTKGTLTA</sequence>